<gene>
    <name evidence="1" type="primary">trpA</name>
    <name type="ordered locus">MM_2821</name>
</gene>
<comment type="function">
    <text>The alpha subunit is responsible for the aldol cleavage of indoleglycerol phosphate to indole and glyceraldehyde 3-phosphate.</text>
</comment>
<comment type="catalytic activity">
    <reaction evidence="1">
        <text>(1S,2R)-1-C-(indol-3-yl)glycerol 3-phosphate + L-serine = D-glyceraldehyde 3-phosphate + L-tryptophan + H2O</text>
        <dbReference type="Rhea" id="RHEA:10532"/>
        <dbReference type="ChEBI" id="CHEBI:15377"/>
        <dbReference type="ChEBI" id="CHEBI:33384"/>
        <dbReference type="ChEBI" id="CHEBI:57912"/>
        <dbReference type="ChEBI" id="CHEBI:58866"/>
        <dbReference type="ChEBI" id="CHEBI:59776"/>
        <dbReference type="EC" id="4.2.1.20"/>
    </reaction>
</comment>
<comment type="pathway">
    <text evidence="1">Amino-acid biosynthesis; L-tryptophan biosynthesis; L-tryptophan from chorismate: step 5/5.</text>
</comment>
<comment type="subunit">
    <text evidence="1">Tetramer of two alpha and two beta chains.</text>
</comment>
<comment type="similarity">
    <text evidence="1">Belongs to the TrpA family.</text>
</comment>
<name>TRPA_METMA</name>
<proteinExistence type="inferred from homology"/>
<sequence length="271" mass="29069">MKTELKAVLKRPKISEKFDELREKKEGALIGYVMAGDPTFEASSEVVKALAKGGADIIELGFPFSDPVADGPTIQVAGQRALAEGMDIERYFAFARALEVDVPLVCMTYYNPVFRYGVEKFVENAAEAGISGLIIPDIPVEEAADLKTGCDAHGLDLIFLVAPTTTEARIRKILQRGSGFIYLVSRLGVTGARDDVAGSTKELLSRVNTDIPKAVGFGISTGEQAAEVRKAGADGVIVGSAFVRIIEEGTDVNERLETLARELKSGMLEAN</sequence>
<evidence type="ECO:0000255" key="1">
    <source>
        <dbReference type="HAMAP-Rule" id="MF_00131"/>
    </source>
</evidence>
<feature type="chain" id="PRO_0000098891" description="Tryptophan synthase alpha chain">
    <location>
        <begin position="1"/>
        <end position="271"/>
    </location>
</feature>
<feature type="active site" description="Proton acceptor" evidence="1">
    <location>
        <position position="59"/>
    </location>
</feature>
<feature type="active site" description="Proton acceptor" evidence="1">
    <location>
        <position position="70"/>
    </location>
</feature>
<dbReference type="EC" id="4.2.1.20" evidence="1"/>
<dbReference type="EMBL" id="AE008384">
    <property type="protein sequence ID" value="AAM32517.1"/>
    <property type="molecule type" value="Genomic_DNA"/>
</dbReference>
<dbReference type="RefSeq" id="WP_011034729.1">
    <property type="nucleotide sequence ID" value="NC_003901.1"/>
</dbReference>
<dbReference type="SMR" id="Q8PT96"/>
<dbReference type="GeneID" id="82161909"/>
<dbReference type="KEGG" id="mma:MM_2821"/>
<dbReference type="PATRIC" id="fig|192952.21.peg.3256"/>
<dbReference type="eggNOG" id="arCOG01086">
    <property type="taxonomic scope" value="Archaea"/>
</dbReference>
<dbReference type="HOGENOM" id="CLU_016734_0_0_2"/>
<dbReference type="UniPathway" id="UPA00035">
    <property type="reaction ID" value="UER00044"/>
</dbReference>
<dbReference type="Proteomes" id="UP000000595">
    <property type="component" value="Chromosome"/>
</dbReference>
<dbReference type="GO" id="GO:0005829">
    <property type="term" value="C:cytosol"/>
    <property type="evidence" value="ECO:0007669"/>
    <property type="project" value="TreeGrafter"/>
</dbReference>
<dbReference type="GO" id="GO:0004834">
    <property type="term" value="F:tryptophan synthase activity"/>
    <property type="evidence" value="ECO:0007669"/>
    <property type="project" value="UniProtKB-UniRule"/>
</dbReference>
<dbReference type="CDD" id="cd04724">
    <property type="entry name" value="Tryptophan_synthase_alpha"/>
    <property type="match status" value="1"/>
</dbReference>
<dbReference type="FunFam" id="3.20.20.70:FF:000037">
    <property type="entry name" value="Tryptophan synthase alpha chain"/>
    <property type="match status" value="1"/>
</dbReference>
<dbReference type="Gene3D" id="3.20.20.70">
    <property type="entry name" value="Aldolase class I"/>
    <property type="match status" value="1"/>
</dbReference>
<dbReference type="HAMAP" id="MF_00131">
    <property type="entry name" value="Trp_synth_alpha"/>
    <property type="match status" value="1"/>
</dbReference>
<dbReference type="InterPro" id="IPR013785">
    <property type="entry name" value="Aldolase_TIM"/>
</dbReference>
<dbReference type="InterPro" id="IPR011060">
    <property type="entry name" value="RibuloseP-bd_barrel"/>
</dbReference>
<dbReference type="InterPro" id="IPR018204">
    <property type="entry name" value="Trp_synthase_alpha_AS"/>
</dbReference>
<dbReference type="InterPro" id="IPR002028">
    <property type="entry name" value="Trp_synthase_suA"/>
</dbReference>
<dbReference type="NCBIfam" id="TIGR00262">
    <property type="entry name" value="trpA"/>
    <property type="match status" value="1"/>
</dbReference>
<dbReference type="PANTHER" id="PTHR43406:SF1">
    <property type="entry name" value="TRYPTOPHAN SYNTHASE ALPHA CHAIN, CHLOROPLASTIC"/>
    <property type="match status" value="1"/>
</dbReference>
<dbReference type="PANTHER" id="PTHR43406">
    <property type="entry name" value="TRYPTOPHAN SYNTHASE, ALPHA CHAIN"/>
    <property type="match status" value="1"/>
</dbReference>
<dbReference type="Pfam" id="PF00290">
    <property type="entry name" value="Trp_syntA"/>
    <property type="match status" value="1"/>
</dbReference>
<dbReference type="SUPFAM" id="SSF51366">
    <property type="entry name" value="Ribulose-phoshate binding barrel"/>
    <property type="match status" value="1"/>
</dbReference>
<dbReference type="PROSITE" id="PS00167">
    <property type="entry name" value="TRP_SYNTHASE_ALPHA"/>
    <property type="match status" value="1"/>
</dbReference>
<protein>
    <recommendedName>
        <fullName evidence="1">Tryptophan synthase alpha chain</fullName>
        <ecNumber evidence="1">4.2.1.20</ecNumber>
    </recommendedName>
</protein>
<organism>
    <name type="scientific">Methanosarcina mazei (strain ATCC BAA-159 / DSM 3647 / Goe1 / Go1 / JCM 11833 / OCM 88)</name>
    <name type="common">Methanosarcina frisia</name>
    <dbReference type="NCBI Taxonomy" id="192952"/>
    <lineage>
        <taxon>Archaea</taxon>
        <taxon>Methanobacteriati</taxon>
        <taxon>Methanobacteriota</taxon>
        <taxon>Stenosarchaea group</taxon>
        <taxon>Methanomicrobia</taxon>
        <taxon>Methanosarcinales</taxon>
        <taxon>Methanosarcinaceae</taxon>
        <taxon>Methanosarcina</taxon>
    </lineage>
</organism>
<keyword id="KW-0028">Amino-acid biosynthesis</keyword>
<keyword id="KW-0057">Aromatic amino acid biosynthesis</keyword>
<keyword id="KW-0456">Lyase</keyword>
<keyword id="KW-0822">Tryptophan biosynthesis</keyword>
<accession>Q8PT96</accession>
<reference key="1">
    <citation type="journal article" date="2002" name="J. Mol. Microbiol. Biotechnol.">
        <title>The genome of Methanosarcina mazei: evidence for lateral gene transfer between Bacteria and Archaea.</title>
        <authorList>
            <person name="Deppenmeier U."/>
            <person name="Johann A."/>
            <person name="Hartsch T."/>
            <person name="Merkl R."/>
            <person name="Schmitz R.A."/>
            <person name="Martinez-Arias R."/>
            <person name="Henne A."/>
            <person name="Wiezer A."/>
            <person name="Baeumer S."/>
            <person name="Jacobi C."/>
            <person name="Brueggemann H."/>
            <person name="Lienard T."/>
            <person name="Christmann A."/>
            <person name="Boemecke M."/>
            <person name="Steckel S."/>
            <person name="Bhattacharyya A."/>
            <person name="Lykidis A."/>
            <person name="Overbeek R."/>
            <person name="Klenk H.-P."/>
            <person name="Gunsalus R.P."/>
            <person name="Fritz H.-J."/>
            <person name="Gottschalk G."/>
        </authorList>
    </citation>
    <scope>NUCLEOTIDE SEQUENCE [LARGE SCALE GENOMIC DNA]</scope>
    <source>
        <strain>ATCC BAA-159 / DSM 3647 / Goe1 / Go1 / JCM 11833 / OCM 88</strain>
    </source>
</reference>